<comment type="function">
    <text evidence="2">Component of the cytochrome c oxidase, the last enzyme in the mitochondrial electron transport chain which drives oxidative phosphorylation. The respiratory chain contains 3 multisubunit complexes succinate dehydrogenase (complex II, CII), ubiquinol-cytochrome c oxidoreductase (cytochrome b-c1 complex, complex III, CIII) and cytochrome c oxidase (complex IV, CIV), that cooperate to transfer electrons derived from NADH and succinate to molecular oxygen, creating an electrochemical gradient over the inner membrane that drives transmembrane transport and the ATP synthase. Cytochrome c oxidase is the component of the respiratory chain that catalyzes the reduction of oxygen to water. Electrons originating from reduced cytochrome c in the intermembrane space (IMS) are transferred via the dinuclear copper A center (CU(A)) of subunit 2 and heme A of subunit 1 to the active site in subunit 1, a binuclear center (BNC) formed by heme A3 and copper B (CU(B)). The BNC reduces molecular oxygen to 2 water molecules using 4 electrons from cytochrome c in the IMS and 4 protons from the mitochondrial matrix.</text>
</comment>
<comment type="catalytic activity">
    <reaction evidence="2">
        <text>4 Fe(II)-[cytochrome c] + O2 + 8 H(+)(in) = 4 Fe(III)-[cytochrome c] + 2 H2O + 4 H(+)(out)</text>
        <dbReference type="Rhea" id="RHEA:11436"/>
        <dbReference type="Rhea" id="RHEA-COMP:10350"/>
        <dbReference type="Rhea" id="RHEA-COMP:14399"/>
        <dbReference type="ChEBI" id="CHEBI:15377"/>
        <dbReference type="ChEBI" id="CHEBI:15378"/>
        <dbReference type="ChEBI" id="CHEBI:15379"/>
        <dbReference type="ChEBI" id="CHEBI:29033"/>
        <dbReference type="ChEBI" id="CHEBI:29034"/>
        <dbReference type="EC" id="7.1.1.9"/>
    </reaction>
    <physiologicalReaction direction="left-to-right" evidence="2">
        <dbReference type="Rhea" id="RHEA:11437"/>
    </physiologicalReaction>
</comment>
<comment type="subunit">
    <text evidence="1">Component of the cytochrome c oxidase (complex IV, CIV), a multisubunit enzyme composed of 14 subunits. The complex is composed of a catalytic core of 3 subunits MT-CO1, MT-CO2 and MT-CO3, encoded in the mitochondrial DNA, and 11 supernumerary subunits COX4I, COX5A, COX5B, COX6A, COX6B, COX6C, COX7A, COX7B, COX7C, COX8 and NDUFA4, which are encoded in the nuclear genome. The complex exists as a monomer or a dimer and forms supercomplexes (SCs) in the inner mitochondrial membrane with NADH-ubiquinone oxidoreductase (complex I, CI) and ubiquinol-cytochrome c oxidoreductase (cytochrome b-c1 complex, complex III, CIII), resulting in different assemblies (supercomplex SCI(1)III(2)IV(1) and megacomplex MCI(2)III(2)IV(2)).</text>
</comment>
<comment type="subcellular location">
    <subcellularLocation>
        <location evidence="1">Mitochondrion inner membrane</location>
        <topology evidence="1">Multi-pass membrane protein</topology>
    </subcellularLocation>
</comment>
<comment type="similarity">
    <text evidence="3">Belongs to the cytochrome c oxidase subunit 3 family.</text>
</comment>
<organism>
    <name type="scientific">Cyprinus carpio</name>
    <name type="common">Common carp</name>
    <dbReference type="NCBI Taxonomy" id="7962"/>
    <lineage>
        <taxon>Eukaryota</taxon>
        <taxon>Metazoa</taxon>
        <taxon>Chordata</taxon>
        <taxon>Craniata</taxon>
        <taxon>Vertebrata</taxon>
        <taxon>Euteleostomi</taxon>
        <taxon>Actinopterygii</taxon>
        <taxon>Neopterygii</taxon>
        <taxon>Teleostei</taxon>
        <taxon>Ostariophysi</taxon>
        <taxon>Cypriniformes</taxon>
        <taxon>Cyprinidae</taxon>
        <taxon>Cyprininae</taxon>
        <taxon>Cyprinus</taxon>
    </lineage>
</organism>
<name>COX3_CYPCA</name>
<feature type="chain" id="PRO_0000183762" description="Cytochrome c oxidase subunit 3">
    <location>
        <begin position="1"/>
        <end position="261"/>
    </location>
</feature>
<feature type="topological domain" description="Mitochondrial matrix" evidence="1">
    <location>
        <begin position="1"/>
        <end position="15"/>
    </location>
</feature>
<feature type="transmembrane region" description="Helical; Name=I" evidence="1">
    <location>
        <begin position="16"/>
        <end position="34"/>
    </location>
</feature>
<feature type="topological domain" description="Mitochondrial intermembrane" evidence="1">
    <location>
        <begin position="35"/>
        <end position="40"/>
    </location>
</feature>
<feature type="transmembrane region" description="Helical; Name=II" evidence="1">
    <location>
        <begin position="41"/>
        <end position="66"/>
    </location>
</feature>
<feature type="topological domain" description="Mitochondrial matrix" evidence="1">
    <location>
        <begin position="67"/>
        <end position="72"/>
    </location>
</feature>
<feature type="transmembrane region" description="Helical; Name=III" evidence="1">
    <location>
        <begin position="73"/>
        <end position="105"/>
    </location>
</feature>
<feature type="topological domain" description="Mitochondrial intermembrane" evidence="1">
    <location>
        <begin position="106"/>
        <end position="128"/>
    </location>
</feature>
<feature type="transmembrane region" description="Helical; Name=IV" evidence="1">
    <location>
        <begin position="129"/>
        <end position="152"/>
    </location>
</feature>
<feature type="topological domain" description="Mitochondrial matrix" evidence="1">
    <location>
        <begin position="153"/>
        <end position="155"/>
    </location>
</feature>
<feature type="transmembrane region" description="Helical; Name=V" evidence="1">
    <location>
        <begin position="156"/>
        <end position="183"/>
    </location>
</feature>
<feature type="topological domain" description="Mitochondrial intermembrane" evidence="1">
    <location>
        <begin position="184"/>
        <end position="190"/>
    </location>
</feature>
<feature type="transmembrane region" description="Helical; Name=VI" evidence="1">
    <location>
        <begin position="191"/>
        <end position="223"/>
    </location>
</feature>
<feature type="topological domain" description="Mitochondrial matrix" evidence="1">
    <location>
        <begin position="224"/>
        <end position="232"/>
    </location>
</feature>
<feature type="transmembrane region" description="Helical; Name=VII" evidence="1">
    <location>
        <begin position="233"/>
        <end position="256"/>
    </location>
</feature>
<feature type="topological domain" description="Mitochondrial intermembrane" evidence="1">
    <location>
        <begin position="257"/>
        <end position="261"/>
    </location>
</feature>
<feature type="sequence conflict" description="In Ref. 1; CAA34866." evidence="3" ref="1">
    <original>I</original>
    <variation>M</variation>
    <location>
        <position position="121"/>
    </location>
</feature>
<keyword id="KW-0472">Membrane</keyword>
<keyword id="KW-0496">Mitochondrion</keyword>
<keyword id="KW-0999">Mitochondrion inner membrane</keyword>
<keyword id="KW-1185">Reference proteome</keyword>
<keyword id="KW-1278">Translocase</keyword>
<keyword id="KW-0812">Transmembrane</keyword>
<keyword id="KW-1133">Transmembrane helix</keyword>
<gene>
    <name type="primary">mt-co3</name>
    <name type="synonym">coiii</name>
    <name type="synonym">coxiii</name>
    <name type="synonym">mtco3</name>
</gene>
<geneLocation type="mitochondrion"/>
<reference key="1">
    <citation type="journal article" date="1990" name="Nucleic Acids Res.">
        <title>Nucleotide sequence of carp mitochondrial cytochrome C oxidase III.</title>
        <authorList>
            <person name="Huang C.J."/>
            <person name="Huang F.L."/>
            <person name="Chang Y.S."/>
            <person name="Tsai Y.J."/>
            <person name="Lo T.B."/>
        </authorList>
    </citation>
    <scope>NUCLEOTIDE SEQUENCE [MRNA]</scope>
</reference>
<reference key="2">
    <citation type="journal article" date="1994" name="J. Mol. Evol.">
        <title>The complete nucleotide sequence and gene organization of carp (Cyprinus carpio) mitochondrial genome.</title>
        <authorList>
            <person name="Chang Y.S."/>
            <person name="Huang F.L."/>
            <person name="Lo T.B."/>
        </authorList>
    </citation>
    <scope>NUCLEOTIDE SEQUENCE [GENOMIC DNA]</scope>
</reference>
<proteinExistence type="evidence at transcript level"/>
<sequence>MAHQAHAYHMVDPSPWPLTGAIAALLMTSGLAIWFHFHSTTLMTLGLILLLLTMYQWWRDIIREGTFQGHHTPPVQKGLRYGMILFITSEVFFFLGFFWAFYHSSLAPTPELGGCWPPTGITPLDPFEVPLLNTAVLLASGVTVTWAHHSIMEGERKQAIQSLALTILLGLYFTALQAMEYYEAPFTIADGVYGSTFFVATGFHGLHVIIGSTFLAVCLLRQIQYHFTSEHHFGFEAAAWYWHFVDVVWLFLYVSIYWWGS</sequence>
<dbReference type="EC" id="7.1.1.9"/>
<dbReference type="EMBL" id="X17006">
    <property type="protein sequence ID" value="CAA34866.1"/>
    <property type="molecule type" value="mRNA"/>
</dbReference>
<dbReference type="EMBL" id="X61010">
    <property type="protein sequence ID" value="CAA43341.1"/>
    <property type="molecule type" value="Genomic_DNA"/>
</dbReference>
<dbReference type="PIR" id="S36010">
    <property type="entry name" value="OTCA3"/>
</dbReference>
<dbReference type="RefSeq" id="NP_007088.1">
    <property type="nucleotide sequence ID" value="NC_001606.1"/>
</dbReference>
<dbReference type="SMR" id="P15952"/>
<dbReference type="GeneID" id="807767"/>
<dbReference type="KEGG" id="ccar:807767"/>
<dbReference type="CTD" id="4514"/>
<dbReference type="OMA" id="SIYWWGS"/>
<dbReference type="OrthoDB" id="10050457at2759"/>
<dbReference type="Proteomes" id="UP000694384">
    <property type="component" value="Unplaced"/>
</dbReference>
<dbReference type="Proteomes" id="UP000694427">
    <property type="component" value="Unplaced"/>
</dbReference>
<dbReference type="Proteomes" id="UP000694700">
    <property type="component" value="Unplaced"/>
</dbReference>
<dbReference type="Proteomes" id="UP000694701">
    <property type="component" value="Unplaced"/>
</dbReference>
<dbReference type="Proteomes" id="UP001155660">
    <property type="component" value="Mitochondrion MT"/>
</dbReference>
<dbReference type="GO" id="GO:0005743">
    <property type="term" value="C:mitochondrial inner membrane"/>
    <property type="evidence" value="ECO:0007669"/>
    <property type="project" value="UniProtKB-SubCell"/>
</dbReference>
<dbReference type="GO" id="GO:0045277">
    <property type="term" value="C:respiratory chain complex IV"/>
    <property type="evidence" value="ECO:0000250"/>
    <property type="project" value="UniProtKB"/>
</dbReference>
<dbReference type="GO" id="GO:0004129">
    <property type="term" value="F:cytochrome-c oxidase activity"/>
    <property type="evidence" value="ECO:0007669"/>
    <property type="project" value="UniProtKB-EC"/>
</dbReference>
<dbReference type="GO" id="GO:0006123">
    <property type="term" value="P:mitochondrial electron transport, cytochrome c to oxygen"/>
    <property type="evidence" value="ECO:0007669"/>
    <property type="project" value="TreeGrafter"/>
</dbReference>
<dbReference type="CDD" id="cd01665">
    <property type="entry name" value="Cyt_c_Oxidase_III"/>
    <property type="match status" value="1"/>
</dbReference>
<dbReference type="FunFam" id="1.10.287.70:FF:000048">
    <property type="entry name" value="Cytochrome c oxidase subunit 3"/>
    <property type="match status" value="1"/>
</dbReference>
<dbReference type="FunFam" id="1.20.120.80:FF:000002">
    <property type="entry name" value="Cytochrome c oxidase subunit 3"/>
    <property type="match status" value="1"/>
</dbReference>
<dbReference type="Gene3D" id="1.10.287.70">
    <property type="match status" value="1"/>
</dbReference>
<dbReference type="Gene3D" id="1.20.120.80">
    <property type="entry name" value="Cytochrome c oxidase, subunit III, four-helix bundle"/>
    <property type="match status" value="1"/>
</dbReference>
<dbReference type="InterPro" id="IPR024791">
    <property type="entry name" value="Cyt_c/ubiquinol_Oxase_su3"/>
</dbReference>
<dbReference type="InterPro" id="IPR033945">
    <property type="entry name" value="Cyt_c_oxase_su3_dom"/>
</dbReference>
<dbReference type="InterPro" id="IPR000298">
    <property type="entry name" value="Cyt_c_oxidase-like_su3"/>
</dbReference>
<dbReference type="InterPro" id="IPR035973">
    <property type="entry name" value="Cyt_c_oxidase_su3-like_sf"/>
</dbReference>
<dbReference type="InterPro" id="IPR013833">
    <property type="entry name" value="Cyt_c_oxidase_su3_a-hlx"/>
</dbReference>
<dbReference type="PANTHER" id="PTHR11403:SF7">
    <property type="entry name" value="CYTOCHROME C OXIDASE SUBUNIT 3"/>
    <property type="match status" value="1"/>
</dbReference>
<dbReference type="PANTHER" id="PTHR11403">
    <property type="entry name" value="CYTOCHROME C OXIDASE SUBUNIT III"/>
    <property type="match status" value="1"/>
</dbReference>
<dbReference type="Pfam" id="PF00510">
    <property type="entry name" value="COX3"/>
    <property type="match status" value="1"/>
</dbReference>
<dbReference type="SUPFAM" id="SSF81452">
    <property type="entry name" value="Cytochrome c oxidase subunit III-like"/>
    <property type="match status" value="1"/>
</dbReference>
<dbReference type="PROSITE" id="PS50253">
    <property type="entry name" value="COX3"/>
    <property type="match status" value="1"/>
</dbReference>
<accession>P15952</accession>
<protein>
    <recommendedName>
        <fullName>Cytochrome c oxidase subunit 3</fullName>
        <ecNumber>7.1.1.9</ecNumber>
    </recommendedName>
    <alternativeName>
        <fullName>Cytochrome c oxidase polypeptide III</fullName>
    </alternativeName>
</protein>
<evidence type="ECO:0000250" key="1">
    <source>
        <dbReference type="UniProtKB" id="P00415"/>
    </source>
</evidence>
<evidence type="ECO:0000250" key="2">
    <source>
        <dbReference type="UniProtKB" id="P00420"/>
    </source>
</evidence>
<evidence type="ECO:0000305" key="3"/>